<comment type="function">
    <text evidence="1">Catalyzes the ferrous insertion into protoporphyrin IX.</text>
</comment>
<comment type="catalytic activity">
    <reaction>
        <text>heme b + 2 H(+) = protoporphyrin IX + Fe(2+)</text>
        <dbReference type="Rhea" id="RHEA:22584"/>
        <dbReference type="ChEBI" id="CHEBI:15378"/>
        <dbReference type="ChEBI" id="CHEBI:29033"/>
        <dbReference type="ChEBI" id="CHEBI:57306"/>
        <dbReference type="ChEBI" id="CHEBI:60344"/>
        <dbReference type="EC" id="4.98.1.1"/>
    </reaction>
</comment>
<comment type="cofactor">
    <cofactor evidence="1">
        <name>[2Fe-2S] cluster</name>
        <dbReference type="ChEBI" id="CHEBI:190135"/>
    </cofactor>
    <text evidence="1">Binds 1 [2Fe-2S] cluster.</text>
</comment>
<comment type="pathway">
    <text>Porphyrin-containing compound metabolism; protoheme biosynthesis; protoheme from protoporphyrin-IX: step 1/1.</text>
</comment>
<comment type="subunit">
    <text evidence="1">Monomer.</text>
</comment>
<comment type="subcellular location">
    <subcellularLocation>
        <location evidence="1">Mitochondrion inner membrane</location>
        <topology evidence="1">Peripheral membrane protein</topology>
        <orientation evidence="1">Matrix side</orientation>
    </subcellularLocation>
</comment>
<comment type="similarity">
    <text evidence="3">Belongs to the ferrochelatase family.</text>
</comment>
<name>HEMH_DICDI</name>
<dbReference type="EC" id="4.98.1.1"/>
<dbReference type="EMBL" id="AAFI02000126">
    <property type="protein sequence ID" value="EAL62969.1"/>
    <property type="molecule type" value="Genomic_DNA"/>
</dbReference>
<dbReference type="RefSeq" id="XP_636471.1">
    <property type="nucleotide sequence ID" value="XM_631379.1"/>
</dbReference>
<dbReference type="SMR" id="Q54IA8"/>
<dbReference type="FunCoup" id="Q54IA8">
    <property type="interactions" value="689"/>
</dbReference>
<dbReference type="STRING" id="44689.Q54IA8"/>
<dbReference type="PaxDb" id="44689-DDB0231413"/>
<dbReference type="EnsemblProtists" id="EAL62969">
    <property type="protein sequence ID" value="EAL62969"/>
    <property type="gene ID" value="DDB_G0288891"/>
</dbReference>
<dbReference type="GeneID" id="8626854"/>
<dbReference type="KEGG" id="ddi:DDB_G0288891"/>
<dbReference type="dictyBase" id="DDB_G0288891">
    <property type="gene designation" value="hemH"/>
</dbReference>
<dbReference type="VEuPathDB" id="AmoebaDB:DDB_G0288891"/>
<dbReference type="eggNOG" id="KOG1321">
    <property type="taxonomic scope" value="Eukaryota"/>
</dbReference>
<dbReference type="HOGENOM" id="CLU_018884_1_0_1"/>
<dbReference type="InParanoid" id="Q54IA8"/>
<dbReference type="OMA" id="DPYHCEC"/>
<dbReference type="PhylomeDB" id="Q54IA8"/>
<dbReference type="Reactome" id="R-DDI-189451">
    <property type="pathway name" value="Heme biosynthesis"/>
</dbReference>
<dbReference type="Reactome" id="R-DDI-9837999">
    <property type="pathway name" value="Mitochondrial protein degradation"/>
</dbReference>
<dbReference type="UniPathway" id="UPA00252">
    <property type="reaction ID" value="UER00325"/>
</dbReference>
<dbReference type="PRO" id="PR:Q54IA8"/>
<dbReference type="Proteomes" id="UP000002195">
    <property type="component" value="Chromosome 5"/>
</dbReference>
<dbReference type="GO" id="GO:0005743">
    <property type="term" value="C:mitochondrial inner membrane"/>
    <property type="evidence" value="ECO:0007669"/>
    <property type="project" value="UniProtKB-SubCell"/>
</dbReference>
<dbReference type="GO" id="GO:0005739">
    <property type="term" value="C:mitochondrion"/>
    <property type="evidence" value="ECO:0000250"/>
    <property type="project" value="dictyBase"/>
</dbReference>
<dbReference type="GO" id="GO:0051537">
    <property type="term" value="F:2 iron, 2 sulfur cluster binding"/>
    <property type="evidence" value="ECO:0007669"/>
    <property type="project" value="UniProtKB-KW"/>
</dbReference>
<dbReference type="GO" id="GO:0004325">
    <property type="term" value="F:ferrochelatase activity"/>
    <property type="evidence" value="ECO:0000250"/>
    <property type="project" value="dictyBase"/>
</dbReference>
<dbReference type="GO" id="GO:0046872">
    <property type="term" value="F:metal ion binding"/>
    <property type="evidence" value="ECO:0007669"/>
    <property type="project" value="UniProtKB-KW"/>
</dbReference>
<dbReference type="GO" id="GO:0006783">
    <property type="term" value="P:heme biosynthetic process"/>
    <property type="evidence" value="ECO:0000250"/>
    <property type="project" value="dictyBase"/>
</dbReference>
<dbReference type="CDD" id="cd00419">
    <property type="entry name" value="Ferrochelatase_C"/>
    <property type="match status" value="1"/>
</dbReference>
<dbReference type="CDD" id="cd03411">
    <property type="entry name" value="Ferrochelatase_N"/>
    <property type="match status" value="1"/>
</dbReference>
<dbReference type="FunFam" id="3.40.50.1400:FF:000007">
    <property type="entry name" value="Ferrochelatase"/>
    <property type="match status" value="1"/>
</dbReference>
<dbReference type="Gene3D" id="3.40.50.1400">
    <property type="match status" value="2"/>
</dbReference>
<dbReference type="HAMAP" id="MF_00323">
    <property type="entry name" value="Ferrochelatase"/>
    <property type="match status" value="1"/>
</dbReference>
<dbReference type="InterPro" id="IPR001015">
    <property type="entry name" value="Ferrochelatase"/>
</dbReference>
<dbReference type="InterPro" id="IPR019772">
    <property type="entry name" value="Ferrochelatase_AS"/>
</dbReference>
<dbReference type="InterPro" id="IPR033644">
    <property type="entry name" value="Ferrochelatase_C"/>
</dbReference>
<dbReference type="InterPro" id="IPR033659">
    <property type="entry name" value="Ferrochelatase_N"/>
</dbReference>
<dbReference type="NCBIfam" id="TIGR00109">
    <property type="entry name" value="hemH"/>
    <property type="match status" value="1"/>
</dbReference>
<dbReference type="PANTHER" id="PTHR11108">
    <property type="entry name" value="FERROCHELATASE"/>
    <property type="match status" value="1"/>
</dbReference>
<dbReference type="PANTHER" id="PTHR11108:SF1">
    <property type="entry name" value="FERROCHELATASE, MITOCHONDRIAL"/>
    <property type="match status" value="1"/>
</dbReference>
<dbReference type="Pfam" id="PF00762">
    <property type="entry name" value="Ferrochelatase"/>
    <property type="match status" value="1"/>
</dbReference>
<dbReference type="SUPFAM" id="SSF53800">
    <property type="entry name" value="Chelatase"/>
    <property type="match status" value="1"/>
</dbReference>
<dbReference type="PROSITE" id="PS00534">
    <property type="entry name" value="FERROCHELATASE"/>
    <property type="match status" value="1"/>
</dbReference>
<feature type="transit peptide" description="Mitochondrion" evidence="2">
    <location>
        <begin position="1"/>
        <end position="29"/>
    </location>
</feature>
<feature type="chain" id="PRO_0000327542" description="Ferrochelatase, mitochondrial">
    <location>
        <begin position="30"/>
        <end position="423"/>
    </location>
</feature>
<feature type="active site" evidence="1">
    <location>
        <position position="207"/>
    </location>
</feature>
<feature type="active site" evidence="1">
    <location>
        <position position="380"/>
    </location>
</feature>
<feature type="binding site" evidence="1">
    <location>
        <position position="173"/>
    </location>
    <ligand>
        <name>[2Fe-2S] cluster</name>
        <dbReference type="ChEBI" id="CHEBI:190135"/>
    </ligand>
</feature>
<feature type="binding site" evidence="1">
    <location>
        <position position="401"/>
    </location>
    <ligand>
        <name>[2Fe-2S] cluster</name>
        <dbReference type="ChEBI" id="CHEBI:190135"/>
    </ligand>
</feature>
<feature type="binding site" evidence="1">
    <location>
        <position position="404"/>
    </location>
    <ligand>
        <name>[2Fe-2S] cluster</name>
        <dbReference type="ChEBI" id="CHEBI:190135"/>
    </ligand>
</feature>
<feature type="binding site" evidence="1">
    <location>
        <position position="411"/>
    </location>
    <ligand>
        <name>[2Fe-2S] cluster</name>
        <dbReference type="ChEBI" id="CHEBI:190135"/>
    </ligand>
</feature>
<gene>
    <name type="primary">hemH</name>
    <name type="ORF">DDB_G0288891</name>
</gene>
<protein>
    <recommendedName>
        <fullName>Ferrochelatase, mitochondrial</fullName>
        <ecNumber>4.98.1.1</ecNumber>
    </recommendedName>
    <alternativeName>
        <fullName>Heme synthase</fullName>
    </alternativeName>
    <alternativeName>
        <fullName>Protoheme ferro-lyase</fullName>
    </alternativeName>
</protein>
<keyword id="KW-0001">2Fe-2S</keyword>
<keyword id="KW-0350">Heme biosynthesis</keyword>
<keyword id="KW-0408">Iron</keyword>
<keyword id="KW-0411">Iron-sulfur</keyword>
<keyword id="KW-0456">Lyase</keyword>
<keyword id="KW-0472">Membrane</keyword>
<keyword id="KW-0479">Metal-binding</keyword>
<keyword id="KW-0496">Mitochondrion</keyword>
<keyword id="KW-0999">Mitochondrion inner membrane</keyword>
<keyword id="KW-0627">Porphyrin biosynthesis</keyword>
<keyword id="KW-1185">Reference proteome</keyword>
<keyword id="KW-0809">Transit peptide</keyword>
<sequence length="423" mass="47990">MISRKIISTINSKTFYNKSLSYCTVNNNKNTTININNNNEKPKIKTGILMLNLGGPSKLEEVEPFLTRLFTDKEIFKLPFQKYTGTLIAKRRSNAVMKLYEAIGGGSPIRKWTEKQGELLSSMMDKISPETAPHKHYIGFRYSDPLIADTLDQMENDNVERVVAFSQYPQYSCTTTGSSLNNLWKTLEEKQMQSKFKWSVIDRWQDHKGFIDATIHKIKKAYNQFNSKLRELDIDDVDANNNNNNNKPVLVFSAHSLPMSTVEKGDPYPQEVAETVCRVMDGLGIRDEETGKPLEYILAWQSKVGPLPWLSPKTSFVIEQLAKKGRNAIVIPIAFTSDHIETLSEIDIELQHLAKKCGMKLLVRSESLNDDPLIISAMADLVNTHLKSNKTIHSNQYHLKCPGCKDDSTFCRTISNPIQALKL</sequence>
<accession>Q54IA8</accession>
<reference key="1">
    <citation type="journal article" date="2005" name="Nature">
        <title>The genome of the social amoeba Dictyostelium discoideum.</title>
        <authorList>
            <person name="Eichinger L."/>
            <person name="Pachebat J.A."/>
            <person name="Gloeckner G."/>
            <person name="Rajandream M.A."/>
            <person name="Sucgang R."/>
            <person name="Berriman M."/>
            <person name="Song J."/>
            <person name="Olsen R."/>
            <person name="Szafranski K."/>
            <person name="Xu Q."/>
            <person name="Tunggal B."/>
            <person name="Kummerfeld S."/>
            <person name="Madera M."/>
            <person name="Konfortov B.A."/>
            <person name="Rivero F."/>
            <person name="Bankier A.T."/>
            <person name="Lehmann R."/>
            <person name="Hamlin N."/>
            <person name="Davies R."/>
            <person name="Gaudet P."/>
            <person name="Fey P."/>
            <person name="Pilcher K."/>
            <person name="Chen G."/>
            <person name="Saunders D."/>
            <person name="Sodergren E.J."/>
            <person name="Davis P."/>
            <person name="Kerhornou A."/>
            <person name="Nie X."/>
            <person name="Hall N."/>
            <person name="Anjard C."/>
            <person name="Hemphill L."/>
            <person name="Bason N."/>
            <person name="Farbrother P."/>
            <person name="Desany B."/>
            <person name="Just E."/>
            <person name="Morio T."/>
            <person name="Rost R."/>
            <person name="Churcher C.M."/>
            <person name="Cooper J."/>
            <person name="Haydock S."/>
            <person name="van Driessche N."/>
            <person name="Cronin A."/>
            <person name="Goodhead I."/>
            <person name="Muzny D.M."/>
            <person name="Mourier T."/>
            <person name="Pain A."/>
            <person name="Lu M."/>
            <person name="Harper D."/>
            <person name="Lindsay R."/>
            <person name="Hauser H."/>
            <person name="James K.D."/>
            <person name="Quiles M."/>
            <person name="Madan Babu M."/>
            <person name="Saito T."/>
            <person name="Buchrieser C."/>
            <person name="Wardroper A."/>
            <person name="Felder M."/>
            <person name="Thangavelu M."/>
            <person name="Johnson D."/>
            <person name="Knights A."/>
            <person name="Loulseged H."/>
            <person name="Mungall K.L."/>
            <person name="Oliver K."/>
            <person name="Price C."/>
            <person name="Quail M.A."/>
            <person name="Urushihara H."/>
            <person name="Hernandez J."/>
            <person name="Rabbinowitsch E."/>
            <person name="Steffen D."/>
            <person name="Sanders M."/>
            <person name="Ma J."/>
            <person name="Kohara Y."/>
            <person name="Sharp S."/>
            <person name="Simmonds M.N."/>
            <person name="Spiegler S."/>
            <person name="Tivey A."/>
            <person name="Sugano S."/>
            <person name="White B."/>
            <person name="Walker D."/>
            <person name="Woodward J.R."/>
            <person name="Winckler T."/>
            <person name="Tanaka Y."/>
            <person name="Shaulsky G."/>
            <person name="Schleicher M."/>
            <person name="Weinstock G.M."/>
            <person name="Rosenthal A."/>
            <person name="Cox E.C."/>
            <person name="Chisholm R.L."/>
            <person name="Gibbs R.A."/>
            <person name="Loomis W.F."/>
            <person name="Platzer M."/>
            <person name="Kay R.R."/>
            <person name="Williams J.G."/>
            <person name="Dear P.H."/>
            <person name="Noegel A.A."/>
            <person name="Barrell B.G."/>
            <person name="Kuspa A."/>
        </authorList>
    </citation>
    <scope>NUCLEOTIDE SEQUENCE [LARGE SCALE GENOMIC DNA]</scope>
    <source>
        <strain>AX4</strain>
    </source>
</reference>
<organism>
    <name type="scientific">Dictyostelium discoideum</name>
    <name type="common">Social amoeba</name>
    <dbReference type="NCBI Taxonomy" id="44689"/>
    <lineage>
        <taxon>Eukaryota</taxon>
        <taxon>Amoebozoa</taxon>
        <taxon>Evosea</taxon>
        <taxon>Eumycetozoa</taxon>
        <taxon>Dictyostelia</taxon>
        <taxon>Dictyosteliales</taxon>
        <taxon>Dictyosteliaceae</taxon>
        <taxon>Dictyostelium</taxon>
    </lineage>
</organism>
<proteinExistence type="inferred from homology"/>
<evidence type="ECO:0000250" key="1"/>
<evidence type="ECO:0000255" key="2"/>
<evidence type="ECO:0000305" key="3"/>